<proteinExistence type="predicted"/>
<reference key="1">
    <citation type="journal article" date="1992" name="J. Gen. Virol.">
        <title>Nucleotide sequence of the tick-borne orthomyxo-like Dhori/India/1313/61 virus membrane protein gene.</title>
        <authorList>
            <person name="Clay W.C."/>
            <person name="Fuller F.J."/>
        </authorList>
    </citation>
    <scope>NUCLEOTIDE SEQUENCE [GENOMIC RNA]</scope>
</reference>
<dbReference type="EMBL" id="M95567">
    <property type="protein sequence ID" value="AAA42966.1"/>
    <property type="molecule type" value="Genomic_RNA"/>
</dbReference>
<dbReference type="PIR" id="JQ1747">
    <property type="entry name" value="JQ1747"/>
</dbReference>
<dbReference type="SMR" id="Q01479"/>
<dbReference type="GO" id="GO:0019031">
    <property type="term" value="C:viral envelope"/>
    <property type="evidence" value="ECO:0007669"/>
    <property type="project" value="UniProtKB-KW"/>
</dbReference>
<dbReference type="GO" id="GO:0039660">
    <property type="term" value="F:structural constituent of virion"/>
    <property type="evidence" value="ECO:0007669"/>
    <property type="project" value="UniProtKB-KW"/>
</dbReference>
<dbReference type="InterPro" id="IPR035212">
    <property type="entry name" value="Mx/ML_C"/>
</dbReference>
<dbReference type="Pfam" id="PF17536">
    <property type="entry name" value="Mx_ML"/>
    <property type="match status" value="1"/>
</dbReference>
<accession>Q01479</accession>
<protein>
    <recommendedName>
        <fullName>Matrix protein 1</fullName>
        <shortName>M1</shortName>
    </recommendedName>
</protein>
<organismHost>
    <name type="scientific">Homo sapiens</name>
    <name type="common">Human</name>
    <dbReference type="NCBI Taxonomy" id="9606"/>
</organismHost>
<organismHost>
    <name type="scientific">Ixodida</name>
    <name type="common">ticks</name>
    <dbReference type="NCBI Taxonomy" id="6935"/>
</organismHost>
<sequence>MAHQMAAGNSLDSTCMPRIGPHVREMENCHSEKTCARIWKTVRDESTYGTDELIQVALVYKYVTRKTPEAFVLISNRLKGGKYDMNSVKKGYKAKDGLQEISNYISSLDREGKQVLACMLILSTQSIGKTVLVELLAGISGKHPMEVLPVHTNNIVMYDSDSEDEHRDLWLDEVAKQLNTLTPVLKGKYETAEEKEICGLVKQRIEDFRELEKLAAGSGREYDKRMYTKGLLKELCSILQGHQVIKLKGLTYQILVGVGEQLYQLLKSVD</sequence>
<organism>
    <name type="scientific">Dhori virus (strain Indian/1313/61)</name>
    <name type="common">Dho</name>
    <dbReference type="NCBI Taxonomy" id="11319"/>
    <lineage>
        <taxon>Viruses</taxon>
        <taxon>Riboviria</taxon>
        <taxon>Orthornavirae</taxon>
        <taxon>Negarnaviricota</taxon>
        <taxon>Polyploviricotina</taxon>
        <taxon>Insthoviricetes</taxon>
        <taxon>Articulavirales</taxon>
        <taxon>Orthomyxoviridae</taxon>
        <taxon>Thogotovirus</taxon>
        <taxon>Thogotovirus dhoriense</taxon>
    </lineage>
</organism>
<feature type="chain" id="PRO_0000078902" description="Matrix protein 1">
    <location>
        <begin position="1"/>
        <end position="270"/>
    </location>
</feature>
<gene>
    <name type="primary">M1</name>
</gene>
<name>M1_DHVI1</name>
<keyword id="KW-0261">Viral envelope protein</keyword>
<keyword id="KW-0468">Viral matrix protein</keyword>
<keyword id="KW-0946">Virion</keyword>
<comment type="subcellular location">
    <subcellularLocation>
        <location evidence="1">Virion</location>
    </subcellularLocation>
</comment>
<evidence type="ECO:0000305" key="1"/>